<evidence type="ECO:0000255" key="1">
    <source>
        <dbReference type="HAMAP-Rule" id="MF_00544"/>
    </source>
</evidence>
<protein>
    <recommendedName>
        <fullName evidence="1">Tryptophanase</fullName>
        <ecNumber evidence="1">4.1.99.1</ecNumber>
    </recommendedName>
    <alternativeName>
        <fullName evidence="1">L-tryptophan indole-lyase</fullName>
        <shortName evidence="1">TNase</shortName>
    </alternativeName>
</protein>
<dbReference type="EC" id="4.1.99.1" evidence="1"/>
<dbReference type="EMBL" id="CU928163">
    <property type="protein sequence ID" value="CAR15379.1"/>
    <property type="molecule type" value="Genomic_DNA"/>
</dbReference>
<dbReference type="RefSeq" id="WP_001295247.1">
    <property type="nucleotide sequence ID" value="NC_011751.1"/>
</dbReference>
<dbReference type="RefSeq" id="YP_002414874.1">
    <property type="nucleotide sequence ID" value="NC_011751.1"/>
</dbReference>
<dbReference type="SMR" id="B7NF25"/>
<dbReference type="STRING" id="585056.ECUMN_4239"/>
<dbReference type="GeneID" id="75205423"/>
<dbReference type="KEGG" id="eum:ECUMN_4239"/>
<dbReference type="PATRIC" id="fig|585056.7.peg.4410"/>
<dbReference type="HOGENOM" id="CLU_047223_0_0_6"/>
<dbReference type="UniPathway" id="UPA00332">
    <property type="reaction ID" value="UER00452"/>
</dbReference>
<dbReference type="Proteomes" id="UP000007097">
    <property type="component" value="Chromosome"/>
</dbReference>
<dbReference type="GO" id="GO:0009034">
    <property type="term" value="F:tryptophanase activity"/>
    <property type="evidence" value="ECO:0007669"/>
    <property type="project" value="UniProtKB-UniRule"/>
</dbReference>
<dbReference type="FunFam" id="3.40.640.10:FF:000039">
    <property type="entry name" value="Tryptophanase"/>
    <property type="match status" value="1"/>
</dbReference>
<dbReference type="Gene3D" id="3.90.1150.10">
    <property type="entry name" value="Aspartate Aminotransferase, domain 1"/>
    <property type="match status" value="1"/>
</dbReference>
<dbReference type="Gene3D" id="3.40.640.10">
    <property type="entry name" value="Type I PLP-dependent aspartate aminotransferase-like (Major domain)"/>
    <property type="match status" value="1"/>
</dbReference>
<dbReference type="HAMAP" id="MF_00544">
    <property type="entry name" value="Tryptophanase"/>
    <property type="match status" value="1"/>
</dbReference>
<dbReference type="InterPro" id="IPR001597">
    <property type="entry name" value="ArAA_b-elim_lyase/Thr_aldolase"/>
</dbReference>
<dbReference type="InterPro" id="IPR011166">
    <property type="entry name" value="Beta-eliminating_lyase"/>
</dbReference>
<dbReference type="InterPro" id="IPR015424">
    <property type="entry name" value="PyrdxlP-dep_Trfase"/>
</dbReference>
<dbReference type="InterPro" id="IPR015421">
    <property type="entry name" value="PyrdxlP-dep_Trfase_major"/>
</dbReference>
<dbReference type="InterPro" id="IPR015422">
    <property type="entry name" value="PyrdxlP-dep_Trfase_small"/>
</dbReference>
<dbReference type="InterPro" id="IPR013440">
    <property type="entry name" value="TNase"/>
</dbReference>
<dbReference type="InterPro" id="IPR018176">
    <property type="entry name" value="Tryptophanase_CS"/>
</dbReference>
<dbReference type="NCBIfam" id="NF009709">
    <property type="entry name" value="PRK13238.1"/>
    <property type="match status" value="1"/>
</dbReference>
<dbReference type="NCBIfam" id="TIGR02617">
    <property type="entry name" value="tnaA_trp_ase"/>
    <property type="match status" value="1"/>
</dbReference>
<dbReference type="PANTHER" id="PTHR32325">
    <property type="entry name" value="BETA-ELIMINATING LYASE-LIKE PROTEIN-RELATED"/>
    <property type="match status" value="1"/>
</dbReference>
<dbReference type="PANTHER" id="PTHR32325:SF4">
    <property type="entry name" value="TRYPTOPHANASE"/>
    <property type="match status" value="1"/>
</dbReference>
<dbReference type="Pfam" id="PF01212">
    <property type="entry name" value="Beta_elim_lyase"/>
    <property type="match status" value="1"/>
</dbReference>
<dbReference type="PIRSF" id="PIRSF001386">
    <property type="entry name" value="Trpase"/>
    <property type="match status" value="1"/>
</dbReference>
<dbReference type="SUPFAM" id="SSF53383">
    <property type="entry name" value="PLP-dependent transferases"/>
    <property type="match status" value="1"/>
</dbReference>
<dbReference type="PROSITE" id="PS00853">
    <property type="entry name" value="BETA_ELIM_LYASE"/>
    <property type="match status" value="1"/>
</dbReference>
<gene>
    <name evidence="1" type="primary">tnaA</name>
    <name type="ordered locus">ECUMN_4239</name>
</gene>
<feature type="chain" id="PRO_1000128911" description="Tryptophanase">
    <location>
        <begin position="1"/>
        <end position="471"/>
    </location>
</feature>
<feature type="modified residue" description="N6-acetyllysine" evidence="1">
    <location>
        <position position="5"/>
    </location>
</feature>
<feature type="modified residue" description="N6-acetyllysine" evidence="1">
    <location>
        <position position="115"/>
    </location>
</feature>
<feature type="modified residue" description="N6-acetyllysine" evidence="1">
    <location>
        <position position="156"/>
    </location>
</feature>
<feature type="modified residue" description="N6-(pyridoxal phosphate)lysine" evidence="1">
    <location>
        <position position="270"/>
    </location>
</feature>
<feature type="modified residue" description="N6-acetyllysine" evidence="1">
    <location>
        <position position="450"/>
    </location>
</feature>
<reference key="1">
    <citation type="journal article" date="2009" name="PLoS Genet.">
        <title>Organised genome dynamics in the Escherichia coli species results in highly diverse adaptive paths.</title>
        <authorList>
            <person name="Touchon M."/>
            <person name="Hoede C."/>
            <person name="Tenaillon O."/>
            <person name="Barbe V."/>
            <person name="Baeriswyl S."/>
            <person name="Bidet P."/>
            <person name="Bingen E."/>
            <person name="Bonacorsi S."/>
            <person name="Bouchier C."/>
            <person name="Bouvet O."/>
            <person name="Calteau A."/>
            <person name="Chiapello H."/>
            <person name="Clermont O."/>
            <person name="Cruveiller S."/>
            <person name="Danchin A."/>
            <person name="Diard M."/>
            <person name="Dossat C."/>
            <person name="Karoui M.E."/>
            <person name="Frapy E."/>
            <person name="Garry L."/>
            <person name="Ghigo J.M."/>
            <person name="Gilles A.M."/>
            <person name="Johnson J."/>
            <person name="Le Bouguenec C."/>
            <person name="Lescat M."/>
            <person name="Mangenot S."/>
            <person name="Martinez-Jehanne V."/>
            <person name="Matic I."/>
            <person name="Nassif X."/>
            <person name="Oztas S."/>
            <person name="Petit M.A."/>
            <person name="Pichon C."/>
            <person name="Rouy Z."/>
            <person name="Ruf C.S."/>
            <person name="Schneider D."/>
            <person name="Tourret J."/>
            <person name="Vacherie B."/>
            <person name="Vallenet D."/>
            <person name="Medigue C."/>
            <person name="Rocha E.P.C."/>
            <person name="Denamur E."/>
        </authorList>
    </citation>
    <scope>NUCLEOTIDE SEQUENCE [LARGE SCALE GENOMIC DNA]</scope>
    <source>
        <strain>UMN026 / ExPEC</strain>
    </source>
</reference>
<keyword id="KW-0007">Acetylation</keyword>
<keyword id="KW-0456">Lyase</keyword>
<keyword id="KW-0663">Pyridoxal phosphate</keyword>
<keyword id="KW-0823">Tryptophan catabolism</keyword>
<proteinExistence type="inferred from homology"/>
<sequence length="471" mass="52773">MENFKHLPEPFRIRVIEPVKRTTRAYREEAIIKSGMNPFLLDSEDVFIDLLTDSGTGAVTQSMQAAMMRGDEAYSGSRSYYALAESVKNIFGYQYTIPTHQGRGAEQIYIPVLIKKREQEKGLDRSKMVAFSNYFFDTTQGHSQINGCTVRNVYIKEAFDTGVRYDFKGNFDLEGLERGIEEVGPNNVPYIVATITSNSAGGQPVSLANLKAMYSIAKKYDIPVVMDSARFAENAYFIKQREAEYKDWTIEQITRETYKYADMLAMSAKKDAMVPMGGLLCMKDDSFFDVYTECRTLCVVQEGFPTYGGLEGGAMERLAVGLYDGMNLDWLAYRIAQVQYLVDGLEEIGVVCQQAGGHAAFVDAGKLLPHIPADQFPAQALACELYKVAGIRAVEIGSFLLGRDPKTGKQLPCPAELLRLTIPRATYTQTHMDFIIEAFKHVKENAANIKGLTFTYEPKVLRHFTAKLKEV</sequence>
<comment type="catalytic activity">
    <reaction evidence="1">
        <text>L-tryptophan + H2O = indole + pyruvate + NH4(+)</text>
        <dbReference type="Rhea" id="RHEA:19553"/>
        <dbReference type="ChEBI" id="CHEBI:15361"/>
        <dbReference type="ChEBI" id="CHEBI:15377"/>
        <dbReference type="ChEBI" id="CHEBI:16881"/>
        <dbReference type="ChEBI" id="CHEBI:28938"/>
        <dbReference type="ChEBI" id="CHEBI:57912"/>
        <dbReference type="EC" id="4.1.99.1"/>
    </reaction>
</comment>
<comment type="cofactor">
    <cofactor evidence="1">
        <name>pyridoxal 5'-phosphate</name>
        <dbReference type="ChEBI" id="CHEBI:597326"/>
    </cofactor>
</comment>
<comment type="pathway">
    <text evidence="1">Amino-acid degradation; L-tryptophan degradation via pyruvate pathway; indole and pyruvate from L-tryptophan: step 1/1.</text>
</comment>
<comment type="subunit">
    <text evidence="1">Homotetramer.</text>
</comment>
<comment type="similarity">
    <text evidence="1">Belongs to the beta-eliminating lyase family.</text>
</comment>
<organism>
    <name type="scientific">Escherichia coli O17:K52:H18 (strain UMN026 / ExPEC)</name>
    <dbReference type="NCBI Taxonomy" id="585056"/>
    <lineage>
        <taxon>Bacteria</taxon>
        <taxon>Pseudomonadati</taxon>
        <taxon>Pseudomonadota</taxon>
        <taxon>Gammaproteobacteria</taxon>
        <taxon>Enterobacterales</taxon>
        <taxon>Enterobacteriaceae</taxon>
        <taxon>Escherichia</taxon>
    </lineage>
</organism>
<accession>B7NF25</accession>
<name>TNAA_ECOLU</name>